<proteinExistence type="inferred from homology"/>
<comment type="function">
    <text evidence="1">Functions in nuclear protein import via a substrate-importin alpha-beta transport complex that passes though the nuclear pore complexes (NPC). Binds specifically and directly to substrates containing either a simple or bipartite NLS motif (By similarity).</text>
</comment>
<comment type="subunit">
    <text evidence="1">Forms a complex with tnpo/importin subunit beta.</text>
</comment>
<comment type="subcellular location">
    <subcellularLocation>
        <location evidence="1">Cytoplasm</location>
    </subcellularLocation>
    <subcellularLocation>
        <location evidence="1">Nucleus envelope</location>
    </subcellularLocation>
</comment>
<comment type="domain">
    <text evidence="1">The N-terminal hydrophilic region contains the importin beta binding domain (IBB domain), which is sufficient for binding importin beta and essential for nuclear protein import.</text>
</comment>
<comment type="similarity">
    <text evidence="4">Belongs to the importin alpha family.</text>
</comment>
<comment type="caution">
    <text evidence="4">The gene for this protein is duplicated in strains AX3 and AX4. These strains contain a duplication of a segment of 750 kb of chromosome 2 compared to the corresponding sequence in strain AX2.</text>
</comment>
<feature type="chain" id="PRO_0000327490" description="Probable importin subunit alpha-A">
    <location>
        <begin position="1"/>
        <end position="550"/>
    </location>
</feature>
<feature type="domain" description="IBB" evidence="2">
    <location>
        <begin position="1"/>
        <end position="56"/>
    </location>
</feature>
<feature type="repeat" description="ARM 1">
    <location>
        <begin position="116"/>
        <end position="155"/>
    </location>
</feature>
<feature type="repeat" description="ARM 2">
    <location>
        <begin position="158"/>
        <end position="198"/>
    </location>
</feature>
<feature type="repeat" description="ARM 3">
    <location>
        <begin position="201"/>
        <end position="241"/>
    </location>
</feature>
<feature type="repeat" description="ARM 4">
    <location>
        <begin position="256"/>
        <end position="297"/>
    </location>
</feature>
<feature type="repeat" description="ARM 5">
    <location>
        <begin position="300"/>
        <end position="339"/>
    </location>
</feature>
<feature type="repeat" description="ARM 6">
    <location>
        <begin position="342"/>
        <end position="381"/>
    </location>
</feature>
<feature type="repeat" description="ARM 7">
    <location>
        <begin position="385"/>
        <end position="424"/>
    </location>
</feature>
<feature type="repeat" description="ARM 8">
    <location>
        <begin position="428"/>
        <end position="467"/>
    </location>
</feature>
<feature type="region of interest" description="Disordered" evidence="3">
    <location>
        <begin position="1"/>
        <end position="34"/>
    </location>
</feature>
<feature type="compositionally biased region" description="Basic and acidic residues" evidence="3">
    <location>
        <begin position="1"/>
        <end position="30"/>
    </location>
</feature>
<reference key="1">
    <citation type="journal article" date="2002" name="Nature">
        <title>Sequence and analysis of chromosome 2 of Dictyostelium discoideum.</title>
        <authorList>
            <person name="Gloeckner G."/>
            <person name="Eichinger L."/>
            <person name="Szafranski K."/>
            <person name="Pachebat J.A."/>
            <person name="Bankier A.T."/>
            <person name="Dear P.H."/>
            <person name="Lehmann R."/>
            <person name="Baumgart C."/>
            <person name="Parra G."/>
            <person name="Abril J.F."/>
            <person name="Guigo R."/>
            <person name="Kumpf K."/>
            <person name="Tunggal B."/>
            <person name="Cox E.C."/>
            <person name="Quail M.A."/>
            <person name="Platzer M."/>
            <person name="Rosenthal A."/>
            <person name="Noegel A.A."/>
        </authorList>
    </citation>
    <scope>NUCLEOTIDE SEQUENCE [LARGE SCALE GENOMIC DNA]</scope>
    <source>
        <strain>AX4</strain>
    </source>
</reference>
<reference key="2">
    <citation type="journal article" date="2005" name="Nature">
        <title>The genome of the social amoeba Dictyostelium discoideum.</title>
        <authorList>
            <person name="Eichinger L."/>
            <person name="Pachebat J.A."/>
            <person name="Gloeckner G."/>
            <person name="Rajandream M.A."/>
            <person name="Sucgang R."/>
            <person name="Berriman M."/>
            <person name="Song J."/>
            <person name="Olsen R."/>
            <person name="Szafranski K."/>
            <person name="Xu Q."/>
            <person name="Tunggal B."/>
            <person name="Kummerfeld S."/>
            <person name="Madera M."/>
            <person name="Konfortov B.A."/>
            <person name="Rivero F."/>
            <person name="Bankier A.T."/>
            <person name="Lehmann R."/>
            <person name="Hamlin N."/>
            <person name="Davies R."/>
            <person name="Gaudet P."/>
            <person name="Fey P."/>
            <person name="Pilcher K."/>
            <person name="Chen G."/>
            <person name="Saunders D."/>
            <person name="Sodergren E.J."/>
            <person name="Davis P."/>
            <person name="Kerhornou A."/>
            <person name="Nie X."/>
            <person name="Hall N."/>
            <person name="Anjard C."/>
            <person name="Hemphill L."/>
            <person name="Bason N."/>
            <person name="Farbrother P."/>
            <person name="Desany B."/>
            <person name="Just E."/>
            <person name="Morio T."/>
            <person name="Rost R."/>
            <person name="Churcher C.M."/>
            <person name="Cooper J."/>
            <person name="Haydock S."/>
            <person name="van Driessche N."/>
            <person name="Cronin A."/>
            <person name="Goodhead I."/>
            <person name="Muzny D.M."/>
            <person name="Mourier T."/>
            <person name="Pain A."/>
            <person name="Lu M."/>
            <person name="Harper D."/>
            <person name="Lindsay R."/>
            <person name="Hauser H."/>
            <person name="James K.D."/>
            <person name="Quiles M."/>
            <person name="Madan Babu M."/>
            <person name="Saito T."/>
            <person name="Buchrieser C."/>
            <person name="Wardroper A."/>
            <person name="Felder M."/>
            <person name="Thangavelu M."/>
            <person name="Johnson D."/>
            <person name="Knights A."/>
            <person name="Loulseged H."/>
            <person name="Mungall K.L."/>
            <person name="Oliver K."/>
            <person name="Price C."/>
            <person name="Quail M.A."/>
            <person name="Urushihara H."/>
            <person name="Hernandez J."/>
            <person name="Rabbinowitsch E."/>
            <person name="Steffen D."/>
            <person name="Sanders M."/>
            <person name="Ma J."/>
            <person name="Kohara Y."/>
            <person name="Sharp S."/>
            <person name="Simmonds M.N."/>
            <person name="Spiegler S."/>
            <person name="Tivey A."/>
            <person name="Sugano S."/>
            <person name="White B."/>
            <person name="Walker D."/>
            <person name="Woodward J.R."/>
            <person name="Winckler T."/>
            <person name="Tanaka Y."/>
            <person name="Shaulsky G."/>
            <person name="Schleicher M."/>
            <person name="Weinstock G.M."/>
            <person name="Rosenthal A."/>
            <person name="Cox E.C."/>
            <person name="Chisholm R.L."/>
            <person name="Gibbs R.A."/>
            <person name="Loomis W.F."/>
            <person name="Platzer M."/>
            <person name="Kay R.R."/>
            <person name="Williams J.G."/>
            <person name="Dear P.H."/>
            <person name="Noegel A.A."/>
            <person name="Barrell B.G."/>
            <person name="Kuspa A."/>
        </authorList>
    </citation>
    <scope>NUCLEOTIDE SEQUENCE [LARGE SCALE GENOMIC DNA]</scope>
    <source>
        <strain>AX4</strain>
    </source>
</reference>
<dbReference type="EMBL" id="AAFI02000011">
    <property type="protein sequence ID" value="EAL70488.1"/>
    <property type="molecule type" value="Genomic_DNA"/>
</dbReference>
<dbReference type="EMBL" id="AAFI02000009">
    <property type="protein sequence ID" value="EAL70792.1"/>
    <property type="molecule type" value="Genomic_DNA"/>
</dbReference>
<dbReference type="RefSeq" id="XP_644414.1">
    <property type="nucleotide sequence ID" value="XM_639322.1"/>
</dbReference>
<dbReference type="RefSeq" id="XP_644836.1">
    <property type="nucleotide sequence ID" value="XM_639744.1"/>
</dbReference>
<dbReference type="SMR" id="Q557F4"/>
<dbReference type="FunCoup" id="Q557F4">
    <property type="interactions" value="447"/>
</dbReference>
<dbReference type="STRING" id="44689.Q557F4"/>
<dbReference type="PaxDb" id="44689-DDB0302551"/>
<dbReference type="EnsemblProtists" id="EAL70488">
    <property type="protein sequence ID" value="EAL70488"/>
    <property type="gene ID" value="DDB_G0273595"/>
</dbReference>
<dbReference type="EnsemblProtists" id="EAL70792">
    <property type="protein sequence ID" value="EAL70792"/>
    <property type="gene ID" value="DDB_G0273149"/>
</dbReference>
<dbReference type="GeneID" id="8618938"/>
<dbReference type="GeneID" id="8619039"/>
<dbReference type="KEGG" id="ddi:DDB_G0273149"/>
<dbReference type="KEGG" id="ddi:DDB_G0273595"/>
<dbReference type="dictyBase" id="DDB_G0273149"/>
<dbReference type="dictyBase" id="DDB_G0273595"/>
<dbReference type="VEuPathDB" id="AmoebaDB:DDB_G0273595"/>
<dbReference type="eggNOG" id="KOG0166">
    <property type="taxonomic scope" value="Eukaryota"/>
</dbReference>
<dbReference type="HOGENOM" id="CLU_018084_6_0_1"/>
<dbReference type="InParanoid" id="Q557F4"/>
<dbReference type="OMA" id="LLAHHAM"/>
<dbReference type="PhylomeDB" id="Q557F4"/>
<dbReference type="Reactome" id="R-DDI-909733">
    <property type="pathway name" value="Interferon alpha/beta signaling"/>
</dbReference>
<dbReference type="PRO" id="PR:Q557F4"/>
<dbReference type="Proteomes" id="UP000002195">
    <property type="component" value="Chromosome 2"/>
</dbReference>
<dbReference type="GO" id="GO:0005737">
    <property type="term" value="C:cytoplasm"/>
    <property type="evidence" value="ECO:0007669"/>
    <property type="project" value="UniProtKB-SubCell"/>
</dbReference>
<dbReference type="GO" id="GO:0005635">
    <property type="term" value="C:nuclear envelope"/>
    <property type="evidence" value="ECO:0007669"/>
    <property type="project" value="UniProtKB-SubCell"/>
</dbReference>
<dbReference type="GO" id="GO:0005634">
    <property type="term" value="C:nucleus"/>
    <property type="evidence" value="ECO:0000318"/>
    <property type="project" value="GO_Central"/>
</dbReference>
<dbReference type="GO" id="GO:0061608">
    <property type="term" value="F:nuclear import signal receptor activity"/>
    <property type="evidence" value="ECO:0000318"/>
    <property type="project" value="GO_Central"/>
</dbReference>
<dbReference type="GO" id="GO:0008139">
    <property type="term" value="F:nuclear localization sequence binding"/>
    <property type="evidence" value="ECO:0000318"/>
    <property type="project" value="GO_Central"/>
</dbReference>
<dbReference type="GO" id="GO:0006607">
    <property type="term" value="P:NLS-bearing protein import into nucleus"/>
    <property type="evidence" value="ECO:0000318"/>
    <property type="project" value="GO_Central"/>
</dbReference>
<dbReference type="FunFam" id="1.25.10.10:FF:000009">
    <property type="entry name" value="Importin subunit alpha"/>
    <property type="match status" value="1"/>
</dbReference>
<dbReference type="Gene3D" id="1.20.5.690">
    <property type="entry name" value="Importin-alpha, importin-beta-binding domain"/>
    <property type="match status" value="1"/>
</dbReference>
<dbReference type="Gene3D" id="1.25.10.10">
    <property type="entry name" value="Leucine-rich Repeat Variant"/>
    <property type="match status" value="1"/>
</dbReference>
<dbReference type="InterPro" id="IPR011989">
    <property type="entry name" value="ARM-like"/>
</dbReference>
<dbReference type="InterPro" id="IPR016024">
    <property type="entry name" value="ARM-type_fold"/>
</dbReference>
<dbReference type="InterPro" id="IPR032413">
    <property type="entry name" value="Arm_3"/>
</dbReference>
<dbReference type="InterPro" id="IPR000225">
    <property type="entry name" value="Armadillo"/>
</dbReference>
<dbReference type="InterPro" id="IPR002652">
    <property type="entry name" value="Importin-a_IBB"/>
</dbReference>
<dbReference type="InterPro" id="IPR036975">
    <property type="entry name" value="Importin-a_IBB_sf"/>
</dbReference>
<dbReference type="InterPro" id="IPR024931">
    <property type="entry name" value="Importin_alpha"/>
</dbReference>
<dbReference type="PANTHER" id="PTHR23316">
    <property type="entry name" value="IMPORTIN ALPHA"/>
    <property type="match status" value="1"/>
</dbReference>
<dbReference type="Pfam" id="PF00514">
    <property type="entry name" value="Arm"/>
    <property type="match status" value="5"/>
</dbReference>
<dbReference type="Pfam" id="PF16186">
    <property type="entry name" value="Arm_3"/>
    <property type="match status" value="1"/>
</dbReference>
<dbReference type="Pfam" id="PF01749">
    <property type="entry name" value="IBB"/>
    <property type="match status" value="1"/>
</dbReference>
<dbReference type="PIRSF" id="PIRSF005673">
    <property type="entry name" value="Importin_alpha"/>
    <property type="match status" value="1"/>
</dbReference>
<dbReference type="SMART" id="SM00185">
    <property type="entry name" value="ARM"/>
    <property type="match status" value="8"/>
</dbReference>
<dbReference type="SUPFAM" id="SSF48371">
    <property type="entry name" value="ARM repeat"/>
    <property type="match status" value="1"/>
</dbReference>
<dbReference type="PROSITE" id="PS50176">
    <property type="entry name" value="ARM_REPEAT"/>
    <property type="match status" value="2"/>
</dbReference>
<dbReference type="PROSITE" id="PS51214">
    <property type="entry name" value="IBB"/>
    <property type="match status" value="1"/>
</dbReference>
<keyword id="KW-0963">Cytoplasm</keyword>
<keyword id="KW-0539">Nucleus</keyword>
<keyword id="KW-0653">Protein transport</keyword>
<keyword id="KW-1185">Reference proteome</keyword>
<keyword id="KW-0677">Repeat</keyword>
<keyword id="KW-0813">Transport</keyword>
<gene>
    <name type="ORF">DDB_G0273149</name>
</gene>
<gene>
    <name type="ORF">DDB_G0273595</name>
</gene>
<protein>
    <recommendedName>
        <fullName>Probable importin subunit alpha-A</fullName>
    </recommendedName>
    <alternativeName>
        <fullName>Karyopherin subunit alpha-A</fullName>
    </alternativeName>
</protein>
<evidence type="ECO:0000250" key="1"/>
<evidence type="ECO:0000255" key="2">
    <source>
        <dbReference type="PROSITE-ProRule" id="PRU00561"/>
    </source>
</evidence>
<evidence type="ECO:0000256" key="3">
    <source>
        <dbReference type="SAM" id="MobiDB-lite"/>
    </source>
</evidence>
<evidence type="ECO:0000305" key="4"/>
<sequence>MSSRDKQDSRKKEFKKSLDSETARRKREENSIGIRKNAREELMLKRRGIVQPNPSTSYQIIVPPEVQEQFQKYENETMENKIKNLPGLVTALNSNDQAYVYSSLVQFRKLLSIHAYPPIDQVIECGIIPKLNQLLQCNNPKVQFESAWALTNIASGNNRQTQTVMESGSVPIFIQLLCAETTDEVKEQCAWALGNIAGDTVDSRNYLLKYGAMNALIPLLHYGEDNGATTTSANSERKIGLIQNVVWTISNLCRGKPQPDFSVVSQCLPAINELIRIENLPSEIYGDLCWALSYLCDGPNTKIQAVIDSGVVPRLVKLLEYPDSIVFTPALRAVGNIVTGESSQTQIVIDNNGVELITRLLAVQKKSIRKESCWALSNITAGEPSQIDVVVSNPKTVTTLISLLSHSEHDIKREACWALSNSTNNSSTKSIQTLVRHNILKHFIDLLNSQDLVILKIVLEGLINIIKEGEKTKTKTGVNPYVNLISEMQGESIIYDLQEHQSKDVYKKAFELIEFFESSDYSDSENSEPNINQNGQYEFSSNYNSNSINI</sequence>
<name>IMA1A_DICDI</name>
<organism>
    <name type="scientific">Dictyostelium discoideum</name>
    <name type="common">Social amoeba</name>
    <dbReference type="NCBI Taxonomy" id="44689"/>
    <lineage>
        <taxon>Eukaryota</taxon>
        <taxon>Amoebozoa</taxon>
        <taxon>Evosea</taxon>
        <taxon>Eumycetozoa</taxon>
        <taxon>Dictyostelia</taxon>
        <taxon>Dictyosteliales</taxon>
        <taxon>Dictyosteliaceae</taxon>
        <taxon>Dictyostelium</taxon>
    </lineage>
</organism>
<accession>Q557F4</accession>
<accession>Q869V5</accession>